<reference key="1">
    <citation type="journal article" date="1994" name="Curr. Genet.">
        <title>Cloning and characterization of a chitinase (chit42) cDNA from the mycoparasitic fungus Trichoderma harzianum.</title>
        <authorList>
            <person name="Garcia I."/>
            <person name="Lora J.M."/>
            <person name="de la Cruz J."/>
            <person name="Benitez T."/>
            <person name="Llobell A."/>
            <person name="Pintor-Toro J.A."/>
        </authorList>
    </citation>
    <scope>NUCLEOTIDE SEQUENCE [MRNA]</scope>
    <scope>PROTEIN SEQUENCE OF 35-52; 93-107; 371-385 AND 397-414</scope>
</reference>
<reference key="2">
    <citation type="journal article" date="1992" name="Eur. J. Biochem.">
        <title>Isolation and characterization of three chitinases from Trichoderma harzianum.</title>
        <authorList>
            <person name="de la Cruz J."/>
            <person name="Hidalgo-Gallego A."/>
            <person name="Lora J.M."/>
            <person name="Benitez T."/>
            <person name="Pintor-Toro J.A."/>
            <person name="Llobell A."/>
        </authorList>
    </citation>
    <scope>INDUCTION</scope>
    <scope>SUBCELLULAR LOCATION</scope>
    <scope>FUNCTION</scope>
    <scope>CATALYTIC ACTIVITY</scope>
    <scope>BIOPHYSICOCHEMICAL PROPERTIES</scope>
</reference>
<reference key="3">
    <citation type="journal article" date="2012" name="Proteomics">
        <title>Blue native-PAGE analysis of Trichoderma harzianum secretome reveals cellulases and hemicellulases working as multienzymatic complexes.</title>
        <authorList>
            <person name="da Silva A.J."/>
            <person name="Gomez-Mendoza D.P."/>
            <person name="Junqueira M."/>
            <person name="Domont G.B."/>
            <person name="Ximenes Ferreira Filho E."/>
            <person name="de Sousa M.V."/>
            <person name="Ricart C.A."/>
        </authorList>
    </citation>
    <scope>IDENTIFICATION BY MASS SPECTROMETRY</scope>
    <scope>SUBCELLULAR LOCATION</scope>
    <source>
        <strain>T4</strain>
    </source>
</reference>
<sequence>MLSFLGKSVALLAALQATLSSPKPGHRRASVEKRANGYANSVYFTNWGIYDRNFQPADLVASDVTHVIYSFMNLQADGTVISGDTYADYEKHYADDSWNDVGTNAYGCVKQLFKVKKANRGLKVLLSIGGWTWSTNFPSAASTDANRKNFAKTAITFMKDWGFDGIDIDWEYPADATQASNMILLLKEVRSQRDAYAAQYAPGYHFLLTIAAPAGKDNYSKLRLADLGQVLDYINLMAYDYAGSFSPLTGHDANLFNNPSNPNATPFNTDSAVKDYINGGVPANKIVLGMPIYGRSFQNTAGIGQTYNGVGSGSWEAGIWDYKALPKAGATVQYDSVAKGYYSYNSATKELISFDTPDMINTKVAYLKSLGLGGSMFWEASADKKGADSVIGTSHRALGGLDTTQNLLSYPNSKYDNIKNGLN</sequence>
<gene>
    <name type="primary">chit42</name>
</gene>
<keyword id="KW-0002">3D-structure</keyword>
<keyword id="KW-0119">Carbohydrate metabolism</keyword>
<keyword id="KW-0146">Chitin degradation</keyword>
<keyword id="KW-0147">Chitin-binding</keyword>
<keyword id="KW-0165">Cleavage on pair of basic residues</keyword>
<keyword id="KW-0903">Direct protein sequencing</keyword>
<keyword id="KW-0325">Glycoprotein</keyword>
<keyword id="KW-0326">Glycosidase</keyword>
<keyword id="KW-0378">Hydrolase</keyword>
<keyword id="KW-0624">Polysaccharide degradation</keyword>
<keyword id="KW-0964">Secreted</keyword>
<keyword id="KW-0732">Signal</keyword>
<keyword id="KW-0865">Zymogen</keyword>
<dbReference type="EC" id="3.2.1.14"/>
<dbReference type="EMBL" id="S78423">
    <property type="protein sequence ID" value="AAB34355.1"/>
    <property type="molecule type" value="mRNA"/>
</dbReference>
<dbReference type="PIR" id="S51369">
    <property type="entry name" value="S51369"/>
</dbReference>
<dbReference type="PDB" id="6EPB">
    <property type="method" value="X-ray"/>
    <property type="resolution" value="1.75 A"/>
    <property type="chains" value="A=1-423"/>
</dbReference>
<dbReference type="PDB" id="6YLJ">
    <property type="method" value="X-ray"/>
    <property type="resolution" value="1.75 A"/>
    <property type="chains" value="A=1-423"/>
</dbReference>
<dbReference type="PDB" id="6YN4">
    <property type="method" value="X-ray"/>
    <property type="resolution" value="1.82 A"/>
    <property type="chains" value="A=1-423"/>
</dbReference>
<dbReference type="PDB" id="7AKQ">
    <property type="method" value="X-ray"/>
    <property type="resolution" value="2.32 A"/>
    <property type="chains" value="A=1-423"/>
</dbReference>
<dbReference type="PDBsum" id="6EPB"/>
<dbReference type="PDBsum" id="6YLJ"/>
<dbReference type="PDBsum" id="6YN4"/>
<dbReference type="PDBsum" id="7AKQ"/>
<dbReference type="SMR" id="P48827"/>
<dbReference type="CAZy" id="GH18">
    <property type="family name" value="Glycoside Hydrolase Family 18"/>
</dbReference>
<dbReference type="GlyCosmos" id="P48827">
    <property type="glycosylation" value="1 site, No reported glycans"/>
</dbReference>
<dbReference type="BRENDA" id="3.2.1.14">
    <property type="organism ID" value="6445"/>
</dbReference>
<dbReference type="SABIO-RK" id="P48827"/>
<dbReference type="GO" id="GO:0005576">
    <property type="term" value="C:extracellular region"/>
    <property type="evidence" value="ECO:0007669"/>
    <property type="project" value="UniProtKB-SubCell"/>
</dbReference>
<dbReference type="GO" id="GO:0008061">
    <property type="term" value="F:chitin binding"/>
    <property type="evidence" value="ECO:0007669"/>
    <property type="project" value="UniProtKB-KW"/>
</dbReference>
<dbReference type="GO" id="GO:0008843">
    <property type="term" value="F:endochitinase activity"/>
    <property type="evidence" value="ECO:0007669"/>
    <property type="project" value="UniProtKB-EC"/>
</dbReference>
<dbReference type="GO" id="GO:0006032">
    <property type="term" value="P:chitin catabolic process"/>
    <property type="evidence" value="ECO:0007669"/>
    <property type="project" value="UniProtKB-KW"/>
</dbReference>
<dbReference type="GO" id="GO:0000272">
    <property type="term" value="P:polysaccharide catabolic process"/>
    <property type="evidence" value="ECO:0007669"/>
    <property type="project" value="UniProtKB-KW"/>
</dbReference>
<dbReference type="CDD" id="cd06548">
    <property type="entry name" value="GH18_chitinase"/>
    <property type="match status" value="1"/>
</dbReference>
<dbReference type="FunFam" id="3.10.50.10:FF:000005">
    <property type="entry name" value="Endochitinase B1"/>
    <property type="match status" value="1"/>
</dbReference>
<dbReference type="FunFam" id="3.20.20.80:FF:000075">
    <property type="entry name" value="Sporulation-specific chitinase"/>
    <property type="match status" value="1"/>
</dbReference>
<dbReference type="Gene3D" id="3.10.50.10">
    <property type="match status" value="1"/>
</dbReference>
<dbReference type="Gene3D" id="3.20.20.80">
    <property type="entry name" value="Glycosidases"/>
    <property type="match status" value="1"/>
</dbReference>
<dbReference type="InterPro" id="IPR011583">
    <property type="entry name" value="Chitinase_II/V-like_cat"/>
</dbReference>
<dbReference type="InterPro" id="IPR029070">
    <property type="entry name" value="Chitinase_insertion_sf"/>
</dbReference>
<dbReference type="InterPro" id="IPR001223">
    <property type="entry name" value="Glyco_hydro18_cat"/>
</dbReference>
<dbReference type="InterPro" id="IPR001579">
    <property type="entry name" value="Glyco_hydro_18_chit_AS"/>
</dbReference>
<dbReference type="InterPro" id="IPR017853">
    <property type="entry name" value="Glycoside_hydrolase_SF"/>
</dbReference>
<dbReference type="InterPro" id="IPR050314">
    <property type="entry name" value="Glycosyl_Hydrlase_18"/>
</dbReference>
<dbReference type="PANTHER" id="PTHR11177">
    <property type="entry name" value="CHITINASE"/>
    <property type="match status" value="1"/>
</dbReference>
<dbReference type="PANTHER" id="PTHR11177:SF317">
    <property type="entry name" value="CHITINASE 12-RELATED"/>
    <property type="match status" value="1"/>
</dbReference>
<dbReference type="Pfam" id="PF00704">
    <property type="entry name" value="Glyco_hydro_18"/>
    <property type="match status" value="1"/>
</dbReference>
<dbReference type="SMART" id="SM00636">
    <property type="entry name" value="Glyco_18"/>
    <property type="match status" value="1"/>
</dbReference>
<dbReference type="SUPFAM" id="SSF51445">
    <property type="entry name" value="(Trans)glycosidases"/>
    <property type="match status" value="1"/>
</dbReference>
<dbReference type="SUPFAM" id="SSF54556">
    <property type="entry name" value="Chitinase insertion domain"/>
    <property type="match status" value="1"/>
</dbReference>
<dbReference type="PROSITE" id="PS01095">
    <property type="entry name" value="GH18_1"/>
    <property type="match status" value="1"/>
</dbReference>
<dbReference type="PROSITE" id="PS51910">
    <property type="entry name" value="GH18_2"/>
    <property type="match status" value="1"/>
</dbReference>
<protein>
    <recommendedName>
        <fullName>Endochitinase 42</fullName>
        <ecNumber>3.2.1.14</ecNumber>
    </recommendedName>
    <alternativeName>
        <fullName>42 kDa endochitinase</fullName>
    </alternativeName>
    <alternativeName>
        <fullName>Chitinase 42</fullName>
    </alternativeName>
</protein>
<name>CHI42_TRIHA</name>
<feature type="signal peptide" evidence="1">
    <location>
        <begin position="1"/>
        <end position="22"/>
    </location>
</feature>
<feature type="propeptide" id="PRO_0000011934" evidence="5">
    <location>
        <begin position="23"/>
        <end position="34"/>
    </location>
</feature>
<feature type="chain" id="PRO_0000011935" description="Endochitinase 42">
    <location>
        <begin position="35"/>
        <end position="423"/>
    </location>
</feature>
<feature type="domain" description="GH18" evidence="2">
    <location>
        <begin position="38"/>
        <end position="401"/>
    </location>
</feature>
<feature type="active site" description="Proton donor" evidence="2">
    <location>
        <position position="171"/>
    </location>
</feature>
<feature type="binding site" evidence="2">
    <location>
        <begin position="102"/>
        <end position="103"/>
    </location>
    <ligand>
        <name>chitin</name>
        <dbReference type="ChEBI" id="CHEBI:17029"/>
    </ligand>
</feature>
<feature type="binding site" evidence="2">
    <location>
        <begin position="129"/>
        <end position="132"/>
    </location>
    <ligand>
        <name>chitin</name>
        <dbReference type="ChEBI" id="CHEBI:17029"/>
    </ligand>
</feature>
<feature type="binding site" evidence="2">
    <location>
        <position position="172"/>
    </location>
    <ligand>
        <name>chitin</name>
        <dbReference type="ChEBI" id="CHEBI:17029"/>
    </ligand>
</feature>
<feature type="binding site" evidence="2">
    <location>
        <begin position="237"/>
        <end position="240"/>
    </location>
    <ligand>
        <name>chitin</name>
        <dbReference type="ChEBI" id="CHEBI:17029"/>
    </ligand>
</feature>
<feature type="binding site" evidence="2">
    <location>
        <position position="378"/>
    </location>
    <ligand>
        <name>chitin</name>
        <dbReference type="ChEBI" id="CHEBI:17029"/>
    </ligand>
</feature>
<feature type="glycosylation site" description="N-linked (GlcNAc...) asparagine" evidence="1">
    <location>
        <position position="218"/>
    </location>
</feature>
<feature type="strand" evidence="7">
    <location>
        <begin position="37"/>
        <end position="45"/>
    </location>
</feature>
<feature type="helix" evidence="7">
    <location>
        <begin position="46"/>
        <end position="49"/>
    </location>
</feature>
<feature type="helix" evidence="7">
    <location>
        <begin position="56"/>
        <end position="58"/>
    </location>
</feature>
<feature type="helix" evidence="7">
    <location>
        <begin position="61"/>
        <end position="63"/>
    </location>
</feature>
<feature type="strand" evidence="7">
    <location>
        <begin position="65"/>
        <end position="74"/>
    </location>
</feature>
<feature type="strand" evidence="7">
    <location>
        <begin position="80"/>
        <end position="83"/>
    </location>
</feature>
<feature type="helix" evidence="7">
    <location>
        <begin position="85"/>
        <end position="89"/>
    </location>
</feature>
<feature type="helix" evidence="7">
    <location>
        <begin position="107"/>
        <end position="118"/>
    </location>
</feature>
<feature type="strand" evidence="7">
    <location>
        <begin position="123"/>
        <end position="129"/>
    </location>
</feature>
<feature type="helix" evidence="8">
    <location>
        <begin position="131"/>
        <end position="133"/>
    </location>
</feature>
<feature type="helix" evidence="7">
    <location>
        <begin position="137"/>
        <end position="140"/>
    </location>
</feature>
<feature type="helix" evidence="7">
    <location>
        <begin position="144"/>
        <end position="161"/>
    </location>
</feature>
<feature type="strand" evidence="7">
    <location>
        <begin position="164"/>
        <end position="169"/>
    </location>
</feature>
<feature type="helix" evidence="7">
    <location>
        <begin position="176"/>
        <end position="200"/>
    </location>
</feature>
<feature type="strand" evidence="7">
    <location>
        <begin position="207"/>
        <end position="213"/>
    </location>
</feature>
<feature type="helix" evidence="7">
    <location>
        <begin position="216"/>
        <end position="219"/>
    </location>
</feature>
<feature type="helix" evidence="7">
    <location>
        <begin position="224"/>
        <end position="230"/>
    </location>
</feature>
<feature type="strand" evidence="7">
    <location>
        <begin position="232"/>
        <end position="237"/>
    </location>
</feature>
<feature type="strand" evidence="9">
    <location>
        <begin position="241"/>
        <end position="243"/>
    </location>
</feature>
<feature type="strand" evidence="7">
    <location>
        <begin position="246"/>
        <end position="248"/>
    </location>
</feature>
<feature type="helix" evidence="7">
    <location>
        <begin position="262"/>
        <end position="264"/>
    </location>
</feature>
<feature type="helix" evidence="7">
    <location>
        <begin position="269"/>
        <end position="278"/>
    </location>
</feature>
<feature type="helix" evidence="7">
    <location>
        <begin position="283"/>
        <end position="285"/>
    </location>
</feature>
<feature type="strand" evidence="7">
    <location>
        <begin position="286"/>
        <end position="297"/>
    </location>
</feature>
<feature type="strand" evidence="7">
    <location>
        <begin position="314"/>
        <end position="316"/>
    </location>
</feature>
<feature type="strand" evidence="7">
    <location>
        <begin position="319"/>
        <end position="321"/>
    </location>
</feature>
<feature type="helix" evidence="7">
    <location>
        <begin position="322"/>
        <end position="324"/>
    </location>
</feature>
<feature type="strand" evidence="7">
    <location>
        <begin position="331"/>
        <end position="335"/>
    </location>
</feature>
<feature type="turn" evidence="7">
    <location>
        <begin position="336"/>
        <end position="339"/>
    </location>
</feature>
<feature type="strand" evidence="7">
    <location>
        <begin position="340"/>
        <end position="345"/>
    </location>
</feature>
<feature type="turn" evidence="7">
    <location>
        <begin position="346"/>
        <end position="349"/>
    </location>
</feature>
<feature type="strand" evidence="7">
    <location>
        <begin position="350"/>
        <end position="353"/>
    </location>
</feature>
<feature type="helix" evidence="7">
    <location>
        <begin position="357"/>
        <end position="369"/>
    </location>
</feature>
<feature type="strand" evidence="7">
    <location>
        <begin position="374"/>
        <end position="378"/>
    </location>
</feature>
<feature type="helix" evidence="7">
    <location>
        <begin position="380"/>
        <end position="382"/>
    </location>
</feature>
<feature type="helix" evidence="7">
    <location>
        <begin position="386"/>
        <end position="388"/>
    </location>
</feature>
<feature type="helix" evidence="7">
    <location>
        <begin position="390"/>
        <end position="398"/>
    </location>
</feature>
<feature type="helix" evidence="7">
    <location>
        <begin position="416"/>
        <end position="419"/>
    </location>
</feature>
<feature type="turn" evidence="7">
    <location>
        <begin position="420"/>
        <end position="422"/>
    </location>
</feature>
<organism>
    <name type="scientific">Trichoderma harzianum</name>
    <name type="common">Hypocrea lixii</name>
    <dbReference type="NCBI Taxonomy" id="5544"/>
    <lineage>
        <taxon>Eukaryota</taxon>
        <taxon>Fungi</taxon>
        <taxon>Dikarya</taxon>
        <taxon>Ascomycota</taxon>
        <taxon>Pezizomycotina</taxon>
        <taxon>Sordariomycetes</taxon>
        <taxon>Hypocreomycetidae</taxon>
        <taxon>Hypocreales</taxon>
        <taxon>Hypocreaceae</taxon>
        <taxon>Trichoderma</taxon>
    </lineage>
</organism>
<evidence type="ECO:0000255" key="1"/>
<evidence type="ECO:0000255" key="2">
    <source>
        <dbReference type="PROSITE-ProRule" id="PRU01258"/>
    </source>
</evidence>
<evidence type="ECO:0000269" key="3">
    <source>
    </source>
</evidence>
<evidence type="ECO:0000269" key="4">
    <source>
    </source>
</evidence>
<evidence type="ECO:0000269" key="5">
    <source>
    </source>
</evidence>
<evidence type="ECO:0000305" key="6"/>
<evidence type="ECO:0007829" key="7">
    <source>
        <dbReference type="PDB" id="6EPB"/>
    </source>
</evidence>
<evidence type="ECO:0007829" key="8">
    <source>
        <dbReference type="PDB" id="6YLJ"/>
    </source>
</evidence>
<evidence type="ECO:0007829" key="9">
    <source>
        <dbReference type="PDB" id="7AKQ"/>
    </source>
</evidence>
<comment type="function">
    <text evidence="3">Secreted chitinase involved in the degradation of chitin, a component of the cell walls of fungi and exoskeletal elements of some animals (including worms and arthropods). Plays a morphogenetic role during apical growth, cell division and differentiation (cell wall morphogenesis). Also acts as an antifungal agent. Involved in the degradation and further assimilation of phytopathogenic fungi, namely mycoparasitism, the major mechanism accounting for the antagonistic activity against phytopathogenic fungi displayed by Trichoderma.</text>
</comment>
<comment type="catalytic activity">
    <reaction evidence="3">
        <text>Random endo-hydrolysis of N-acetyl-beta-D-glucosaminide (1-&gt;4)-beta-linkages in chitin and chitodextrins.</text>
        <dbReference type="EC" id="3.2.1.14"/>
    </reaction>
</comment>
<comment type="biophysicochemical properties">
    <kinetics>
        <KM evidence="3">0.3 mg/ml for colloidal chitin</KM>
    </kinetics>
    <temperatureDependence>
        <text evidence="3">Optimum temperature is 45-50 degrees Celsius.</text>
    </temperatureDependence>
</comment>
<comment type="subcellular location">
    <subcellularLocation>
        <location evidence="3 4">Secreted</location>
    </subcellularLocation>
</comment>
<comment type="induction">
    <text evidence="3">Specifically induced by chitin and is catabolite repressed.</text>
</comment>
<comment type="biotechnology">
    <text>The antagonistic activity of Trichoderma harzianum is used for the control of several soil borne plant pathogenic fungi.</text>
</comment>
<comment type="similarity">
    <text evidence="6">Belongs to the glycosyl hydrolase 18 family. Chitinase class V subfamily.</text>
</comment>
<proteinExistence type="evidence at protein level"/>
<accession>P48827</accession>